<gene>
    <name evidence="1" type="primary">minE</name>
    <name type="ordered locus">Bphyt_1056</name>
</gene>
<evidence type="ECO:0000255" key="1">
    <source>
        <dbReference type="HAMAP-Rule" id="MF_00262"/>
    </source>
</evidence>
<reference key="1">
    <citation type="journal article" date="2011" name="J. Bacteriol.">
        <title>Complete genome sequence of the plant growth-promoting endophyte Burkholderia phytofirmans strain PsJN.</title>
        <authorList>
            <person name="Weilharter A."/>
            <person name="Mitter B."/>
            <person name="Shin M.V."/>
            <person name="Chain P.S."/>
            <person name="Nowak J."/>
            <person name="Sessitsch A."/>
        </authorList>
    </citation>
    <scope>NUCLEOTIDE SEQUENCE [LARGE SCALE GENOMIC DNA]</scope>
    <source>
        <strain>DSM 17436 / LMG 22146 / PsJN</strain>
    </source>
</reference>
<organism>
    <name type="scientific">Paraburkholderia phytofirmans (strain DSM 17436 / LMG 22146 / PsJN)</name>
    <name type="common">Burkholderia phytofirmans</name>
    <dbReference type="NCBI Taxonomy" id="398527"/>
    <lineage>
        <taxon>Bacteria</taxon>
        <taxon>Pseudomonadati</taxon>
        <taxon>Pseudomonadota</taxon>
        <taxon>Betaproteobacteria</taxon>
        <taxon>Burkholderiales</taxon>
        <taxon>Burkholderiaceae</taxon>
        <taxon>Paraburkholderia</taxon>
    </lineage>
</organism>
<sequence>MSILSFLLGEKKKSASVAKERLQLIIAHERAGGHAPADYLPALQRELVAVISKYVKISHDDIRVSLERQDDLEVLEVKIEIPQA</sequence>
<name>MINE_PARPJ</name>
<accession>B2T1B8</accession>
<keyword id="KW-0131">Cell cycle</keyword>
<keyword id="KW-0132">Cell division</keyword>
<feature type="chain" id="PRO_1000114209" description="Cell division topological specificity factor">
    <location>
        <begin position="1"/>
        <end position="84"/>
    </location>
</feature>
<proteinExistence type="inferred from homology"/>
<comment type="function">
    <text evidence="1">Prevents the cell division inhibition by proteins MinC and MinD at internal division sites while permitting inhibition at polar sites. This ensures cell division at the proper site by restricting the formation of a division septum at the midpoint of the long axis of the cell.</text>
</comment>
<comment type="similarity">
    <text evidence="1">Belongs to the MinE family.</text>
</comment>
<protein>
    <recommendedName>
        <fullName evidence="1">Cell division topological specificity factor</fullName>
    </recommendedName>
</protein>
<dbReference type="EMBL" id="CP001052">
    <property type="protein sequence ID" value="ACD15475.1"/>
    <property type="molecule type" value="Genomic_DNA"/>
</dbReference>
<dbReference type="RefSeq" id="WP_012432104.1">
    <property type="nucleotide sequence ID" value="NC_010681.1"/>
</dbReference>
<dbReference type="SMR" id="B2T1B8"/>
<dbReference type="STRING" id="398527.Bphyt_1056"/>
<dbReference type="GeneID" id="97306363"/>
<dbReference type="KEGG" id="bpy:Bphyt_1056"/>
<dbReference type="eggNOG" id="COG0851">
    <property type="taxonomic scope" value="Bacteria"/>
</dbReference>
<dbReference type="HOGENOM" id="CLU_137929_2_1_4"/>
<dbReference type="OrthoDB" id="9802655at2"/>
<dbReference type="Proteomes" id="UP000001739">
    <property type="component" value="Chromosome 1"/>
</dbReference>
<dbReference type="GO" id="GO:0051301">
    <property type="term" value="P:cell division"/>
    <property type="evidence" value="ECO:0007669"/>
    <property type="project" value="UniProtKB-KW"/>
</dbReference>
<dbReference type="GO" id="GO:0032955">
    <property type="term" value="P:regulation of division septum assembly"/>
    <property type="evidence" value="ECO:0007669"/>
    <property type="project" value="InterPro"/>
</dbReference>
<dbReference type="FunFam" id="3.30.1070.10:FF:000001">
    <property type="entry name" value="Cell division topological specificity factor"/>
    <property type="match status" value="1"/>
</dbReference>
<dbReference type="Gene3D" id="3.30.1070.10">
    <property type="entry name" value="Cell division topological specificity factor MinE"/>
    <property type="match status" value="1"/>
</dbReference>
<dbReference type="HAMAP" id="MF_00262">
    <property type="entry name" value="MinE"/>
    <property type="match status" value="1"/>
</dbReference>
<dbReference type="InterPro" id="IPR005527">
    <property type="entry name" value="MinE"/>
</dbReference>
<dbReference type="InterPro" id="IPR036707">
    <property type="entry name" value="MinE_sf"/>
</dbReference>
<dbReference type="NCBIfam" id="TIGR01215">
    <property type="entry name" value="minE"/>
    <property type="match status" value="1"/>
</dbReference>
<dbReference type="NCBIfam" id="NF001422">
    <property type="entry name" value="PRK00296.1"/>
    <property type="match status" value="1"/>
</dbReference>
<dbReference type="NCBIfam" id="NF010595">
    <property type="entry name" value="PRK13989.1"/>
    <property type="match status" value="1"/>
</dbReference>
<dbReference type="Pfam" id="PF03776">
    <property type="entry name" value="MinE"/>
    <property type="match status" value="1"/>
</dbReference>
<dbReference type="SUPFAM" id="SSF55229">
    <property type="entry name" value="Cell division protein MinE topological specificity domain"/>
    <property type="match status" value="1"/>
</dbReference>